<proteinExistence type="inferred from homology"/>
<accession>O49691</accession>
<feature type="chain" id="PRO_0000055803" description="RING-H2 finger protein ATL29">
    <location>
        <begin position="1"/>
        <end position="289"/>
    </location>
</feature>
<feature type="transmembrane region" description="Helical" evidence="2">
    <location>
        <begin position="25"/>
        <end position="45"/>
    </location>
</feature>
<feature type="zinc finger region" description="RING-type; atypical" evidence="3">
    <location>
        <begin position="110"/>
        <end position="152"/>
    </location>
</feature>
<feature type="region of interest" description="Disordered" evidence="4">
    <location>
        <begin position="179"/>
        <end position="237"/>
    </location>
</feature>
<feature type="compositionally biased region" description="Polar residues" evidence="4">
    <location>
        <begin position="191"/>
        <end position="207"/>
    </location>
</feature>
<feature type="compositionally biased region" description="Basic and acidic residues" evidence="4">
    <location>
        <begin position="208"/>
        <end position="219"/>
    </location>
</feature>
<comment type="catalytic activity">
    <reaction evidence="5">
        <text>S-ubiquitinyl-[E2 ubiquitin-conjugating enzyme]-L-cysteine + [acceptor protein]-L-lysine = [E2 ubiquitin-conjugating enzyme]-L-cysteine + N(6)-ubiquitinyl-[acceptor protein]-L-lysine.</text>
        <dbReference type="EC" id="2.3.2.27"/>
    </reaction>
</comment>
<comment type="pathway">
    <text>Protein modification; protein ubiquitination.</text>
</comment>
<comment type="subcellular location">
    <subcellularLocation>
        <location evidence="5">Membrane</location>
        <topology evidence="5">Single-pass membrane protein</topology>
    </subcellularLocation>
</comment>
<comment type="domain">
    <text evidence="1">The RING-type zinc finger domain mediates binding to an E2 ubiquitin-conjugating enzyme.</text>
</comment>
<comment type="similarity">
    <text evidence="5">Belongs to the RING-type zinc finger family. ATL subfamily.</text>
</comment>
<sequence length="289" mass="33242">MSTIIPSPLAPQPPQQHYVTPPLTVILTVILLVFFFIGFFTLYFCKCFLDTMVQAWRLHHGGDTVSDNPLQQPEAPPVNPGLELRIINSFPTFPYSSVKDLREEKYGLECAICLLEFDGDHVLRLLTTCYHVFHQECIDLWFESHRTCPVCRRDLDPPPPPENTKPTVDEMIIDVIQETSDDEEDDHHRQQTTTQIDTWPSSGQTSSIKKEQNLPEKFSRSHSTGHSIVRNKPEEEDKYTLRLPEHVKIKVTRGHSQTESCVTFAELIRNRGYDHRRFGEVSGQTQSKN</sequence>
<organism>
    <name type="scientific">Arabidopsis thaliana</name>
    <name type="common">Mouse-ear cress</name>
    <dbReference type="NCBI Taxonomy" id="3702"/>
    <lineage>
        <taxon>Eukaryota</taxon>
        <taxon>Viridiplantae</taxon>
        <taxon>Streptophyta</taxon>
        <taxon>Embryophyta</taxon>
        <taxon>Tracheophyta</taxon>
        <taxon>Spermatophyta</taxon>
        <taxon>Magnoliopsida</taxon>
        <taxon>eudicotyledons</taxon>
        <taxon>Gunneridae</taxon>
        <taxon>Pentapetalae</taxon>
        <taxon>rosids</taxon>
        <taxon>malvids</taxon>
        <taxon>Brassicales</taxon>
        <taxon>Brassicaceae</taxon>
        <taxon>Camelineae</taxon>
        <taxon>Arabidopsis</taxon>
    </lineage>
</organism>
<gene>
    <name type="primary">ATL29</name>
    <name type="ordered locus">At4g17920</name>
    <name type="ORF">T6K21.100</name>
</gene>
<protein>
    <recommendedName>
        <fullName>RING-H2 finger protein ATL29</fullName>
        <ecNumber evidence="5">2.3.2.27</ecNumber>
    </recommendedName>
    <alternativeName>
        <fullName evidence="5">RING-type E3 ubiquitin transferase ATL29</fullName>
    </alternativeName>
</protein>
<keyword id="KW-0472">Membrane</keyword>
<keyword id="KW-0479">Metal-binding</keyword>
<keyword id="KW-1185">Reference proteome</keyword>
<keyword id="KW-0808">Transferase</keyword>
<keyword id="KW-0812">Transmembrane</keyword>
<keyword id="KW-1133">Transmembrane helix</keyword>
<keyword id="KW-0833">Ubl conjugation pathway</keyword>
<keyword id="KW-0862">Zinc</keyword>
<keyword id="KW-0863">Zinc-finger</keyword>
<reference key="1">
    <citation type="journal article" date="1999" name="Nature">
        <title>Sequence and analysis of chromosome 4 of the plant Arabidopsis thaliana.</title>
        <authorList>
            <person name="Mayer K.F.X."/>
            <person name="Schueller C."/>
            <person name="Wambutt R."/>
            <person name="Murphy G."/>
            <person name="Volckaert G."/>
            <person name="Pohl T."/>
            <person name="Duesterhoeft A."/>
            <person name="Stiekema W."/>
            <person name="Entian K.-D."/>
            <person name="Terryn N."/>
            <person name="Harris B."/>
            <person name="Ansorge W."/>
            <person name="Brandt P."/>
            <person name="Grivell L.A."/>
            <person name="Rieger M."/>
            <person name="Weichselgartner M."/>
            <person name="de Simone V."/>
            <person name="Obermaier B."/>
            <person name="Mache R."/>
            <person name="Mueller M."/>
            <person name="Kreis M."/>
            <person name="Delseny M."/>
            <person name="Puigdomenech P."/>
            <person name="Watson M."/>
            <person name="Schmidtheini T."/>
            <person name="Reichert B."/>
            <person name="Portetelle D."/>
            <person name="Perez-Alonso M."/>
            <person name="Boutry M."/>
            <person name="Bancroft I."/>
            <person name="Vos P."/>
            <person name="Hoheisel J."/>
            <person name="Zimmermann W."/>
            <person name="Wedler H."/>
            <person name="Ridley P."/>
            <person name="Langham S.-A."/>
            <person name="McCullagh B."/>
            <person name="Bilham L."/>
            <person name="Robben J."/>
            <person name="van der Schueren J."/>
            <person name="Grymonprez B."/>
            <person name="Chuang Y.-J."/>
            <person name="Vandenbussche F."/>
            <person name="Braeken M."/>
            <person name="Weltjens I."/>
            <person name="Voet M."/>
            <person name="Bastiaens I."/>
            <person name="Aert R."/>
            <person name="Defoor E."/>
            <person name="Weitzenegger T."/>
            <person name="Bothe G."/>
            <person name="Ramsperger U."/>
            <person name="Hilbert H."/>
            <person name="Braun M."/>
            <person name="Holzer E."/>
            <person name="Brandt A."/>
            <person name="Peters S."/>
            <person name="van Staveren M."/>
            <person name="Dirkse W."/>
            <person name="Mooijman P."/>
            <person name="Klein Lankhorst R."/>
            <person name="Rose M."/>
            <person name="Hauf J."/>
            <person name="Koetter P."/>
            <person name="Berneiser S."/>
            <person name="Hempel S."/>
            <person name="Feldpausch M."/>
            <person name="Lamberth S."/>
            <person name="Van den Daele H."/>
            <person name="De Keyser A."/>
            <person name="Buysshaert C."/>
            <person name="Gielen J."/>
            <person name="Villarroel R."/>
            <person name="De Clercq R."/>
            <person name="van Montagu M."/>
            <person name="Rogers J."/>
            <person name="Cronin A."/>
            <person name="Quail M.A."/>
            <person name="Bray-Allen S."/>
            <person name="Clark L."/>
            <person name="Doggett J."/>
            <person name="Hall S."/>
            <person name="Kay M."/>
            <person name="Lennard N."/>
            <person name="McLay K."/>
            <person name="Mayes R."/>
            <person name="Pettett A."/>
            <person name="Rajandream M.A."/>
            <person name="Lyne M."/>
            <person name="Benes V."/>
            <person name="Rechmann S."/>
            <person name="Borkova D."/>
            <person name="Bloecker H."/>
            <person name="Scharfe M."/>
            <person name="Grimm M."/>
            <person name="Loehnert T.-H."/>
            <person name="Dose S."/>
            <person name="de Haan M."/>
            <person name="Maarse A.C."/>
            <person name="Schaefer M."/>
            <person name="Mueller-Auer S."/>
            <person name="Gabel C."/>
            <person name="Fuchs M."/>
            <person name="Fartmann B."/>
            <person name="Granderath K."/>
            <person name="Dauner D."/>
            <person name="Herzl A."/>
            <person name="Neumann S."/>
            <person name="Argiriou A."/>
            <person name="Vitale D."/>
            <person name="Liguori R."/>
            <person name="Piravandi E."/>
            <person name="Massenet O."/>
            <person name="Quigley F."/>
            <person name="Clabauld G."/>
            <person name="Muendlein A."/>
            <person name="Felber R."/>
            <person name="Schnabl S."/>
            <person name="Hiller R."/>
            <person name="Schmidt W."/>
            <person name="Lecharny A."/>
            <person name="Aubourg S."/>
            <person name="Chefdor F."/>
            <person name="Cooke R."/>
            <person name="Berger C."/>
            <person name="Monfort A."/>
            <person name="Casacuberta E."/>
            <person name="Gibbons T."/>
            <person name="Weber N."/>
            <person name="Vandenbol M."/>
            <person name="Bargues M."/>
            <person name="Terol J."/>
            <person name="Torres A."/>
            <person name="Perez-Perez A."/>
            <person name="Purnelle B."/>
            <person name="Bent E."/>
            <person name="Johnson S."/>
            <person name="Tacon D."/>
            <person name="Jesse T."/>
            <person name="Heijnen L."/>
            <person name="Schwarz S."/>
            <person name="Scholler P."/>
            <person name="Heber S."/>
            <person name="Francs P."/>
            <person name="Bielke C."/>
            <person name="Frishman D."/>
            <person name="Haase D."/>
            <person name="Lemcke K."/>
            <person name="Mewes H.-W."/>
            <person name="Stocker S."/>
            <person name="Zaccaria P."/>
            <person name="Bevan M."/>
            <person name="Wilson R.K."/>
            <person name="de la Bastide M."/>
            <person name="Habermann K."/>
            <person name="Parnell L."/>
            <person name="Dedhia N."/>
            <person name="Gnoj L."/>
            <person name="Schutz K."/>
            <person name="Huang E."/>
            <person name="Spiegel L."/>
            <person name="Sekhon M."/>
            <person name="Murray J."/>
            <person name="Sheet P."/>
            <person name="Cordes M."/>
            <person name="Abu-Threideh J."/>
            <person name="Stoneking T."/>
            <person name="Kalicki J."/>
            <person name="Graves T."/>
            <person name="Harmon G."/>
            <person name="Edwards J."/>
            <person name="Latreille P."/>
            <person name="Courtney L."/>
            <person name="Cloud J."/>
            <person name="Abbott A."/>
            <person name="Scott K."/>
            <person name="Johnson D."/>
            <person name="Minx P."/>
            <person name="Bentley D."/>
            <person name="Fulton B."/>
            <person name="Miller N."/>
            <person name="Greco T."/>
            <person name="Kemp K."/>
            <person name="Kramer J."/>
            <person name="Fulton L."/>
            <person name="Mardis E."/>
            <person name="Dante M."/>
            <person name="Pepin K."/>
            <person name="Hillier L.W."/>
            <person name="Nelson J."/>
            <person name="Spieth J."/>
            <person name="Ryan E."/>
            <person name="Andrews S."/>
            <person name="Geisel C."/>
            <person name="Layman D."/>
            <person name="Du H."/>
            <person name="Ali J."/>
            <person name="Berghoff A."/>
            <person name="Jones K."/>
            <person name="Drone K."/>
            <person name="Cotton M."/>
            <person name="Joshu C."/>
            <person name="Antonoiu B."/>
            <person name="Zidanic M."/>
            <person name="Strong C."/>
            <person name="Sun H."/>
            <person name="Lamar B."/>
            <person name="Yordan C."/>
            <person name="Ma P."/>
            <person name="Zhong J."/>
            <person name="Preston R."/>
            <person name="Vil D."/>
            <person name="Shekher M."/>
            <person name="Matero A."/>
            <person name="Shah R."/>
            <person name="Swaby I.K."/>
            <person name="O'Shaughnessy A."/>
            <person name="Rodriguez M."/>
            <person name="Hoffman J."/>
            <person name="Till S."/>
            <person name="Granat S."/>
            <person name="Shohdy N."/>
            <person name="Hasegawa A."/>
            <person name="Hameed A."/>
            <person name="Lodhi M."/>
            <person name="Johnson A."/>
            <person name="Chen E."/>
            <person name="Marra M.A."/>
            <person name="Martienssen R."/>
            <person name="McCombie W.R."/>
        </authorList>
    </citation>
    <scope>NUCLEOTIDE SEQUENCE [LARGE SCALE GENOMIC DNA]</scope>
    <source>
        <strain>cv. Columbia</strain>
    </source>
</reference>
<reference key="2">
    <citation type="journal article" date="2017" name="Plant J.">
        <title>Araport11: a complete reannotation of the Arabidopsis thaliana reference genome.</title>
        <authorList>
            <person name="Cheng C.Y."/>
            <person name="Krishnakumar V."/>
            <person name="Chan A.P."/>
            <person name="Thibaud-Nissen F."/>
            <person name="Schobel S."/>
            <person name="Town C.D."/>
        </authorList>
    </citation>
    <scope>GENOME REANNOTATION</scope>
    <source>
        <strain>cv. Columbia</strain>
    </source>
</reference>
<reference key="3">
    <citation type="journal article" date="2002" name="Genome Biol.">
        <title>Evaluation and classification of RING-finger domains encoded by the Arabidopsis genome.</title>
        <authorList>
            <person name="Kosarev P."/>
            <person name="Mayer K.F.X."/>
            <person name="Hardtke C.S."/>
        </authorList>
    </citation>
    <scope>GENE FAMILY ORGANIZATION</scope>
</reference>
<reference key="4">
    <citation type="journal article" date="2006" name="J. Mol. Evol.">
        <title>The ATL gene family from Arabidopsis thaliana and Oryza sativa comprises a large number of putative ubiquitin ligases of the RING-H2 type.</title>
        <authorList>
            <person name="Serrano M."/>
            <person name="Parra S."/>
            <person name="Alcaraz L.D."/>
            <person name="Guzman P."/>
        </authorList>
    </citation>
    <scope>NOMENCLATURE</scope>
    <scope>GENE FAMILY ORGANIZATION</scope>
</reference>
<name>ATL29_ARATH</name>
<evidence type="ECO:0000250" key="1"/>
<evidence type="ECO:0000255" key="2"/>
<evidence type="ECO:0000255" key="3">
    <source>
        <dbReference type="PROSITE-ProRule" id="PRU00175"/>
    </source>
</evidence>
<evidence type="ECO:0000256" key="4">
    <source>
        <dbReference type="SAM" id="MobiDB-lite"/>
    </source>
</evidence>
<evidence type="ECO:0000305" key="5"/>
<dbReference type="EC" id="2.3.2.27" evidence="5"/>
<dbReference type="EMBL" id="AL021889">
    <property type="protein sequence ID" value="CAA17135.1"/>
    <property type="molecule type" value="Genomic_DNA"/>
</dbReference>
<dbReference type="EMBL" id="AL161547">
    <property type="protein sequence ID" value="CAB78794.1"/>
    <property type="molecule type" value="Genomic_DNA"/>
</dbReference>
<dbReference type="EMBL" id="CP002687">
    <property type="protein sequence ID" value="AEE83968.1"/>
    <property type="molecule type" value="Genomic_DNA"/>
</dbReference>
<dbReference type="PIR" id="T05078">
    <property type="entry name" value="T05078"/>
</dbReference>
<dbReference type="RefSeq" id="NP_193526.1">
    <property type="nucleotide sequence ID" value="NM_117902.2"/>
</dbReference>
<dbReference type="SMR" id="O49691"/>
<dbReference type="GlyGen" id="O49691">
    <property type="glycosylation" value="1 site"/>
</dbReference>
<dbReference type="iPTMnet" id="O49691"/>
<dbReference type="PaxDb" id="3702-AT4G17920.1"/>
<dbReference type="ProteomicsDB" id="246561"/>
<dbReference type="EnsemblPlants" id="AT4G17920.1">
    <property type="protein sequence ID" value="AT4G17920.1"/>
    <property type="gene ID" value="AT4G17920"/>
</dbReference>
<dbReference type="GeneID" id="827517"/>
<dbReference type="Gramene" id="AT4G17920.1">
    <property type="protein sequence ID" value="AT4G17920.1"/>
    <property type="gene ID" value="AT4G17920"/>
</dbReference>
<dbReference type="KEGG" id="ath:AT4G17920"/>
<dbReference type="Araport" id="AT4G17920"/>
<dbReference type="TAIR" id="AT4G17920">
    <property type="gene designation" value="ATL29"/>
</dbReference>
<dbReference type="eggNOG" id="KOG0800">
    <property type="taxonomic scope" value="Eukaryota"/>
</dbReference>
<dbReference type="HOGENOM" id="CLU_035191_3_0_1"/>
<dbReference type="InParanoid" id="O49691"/>
<dbReference type="OMA" id="WFESHRT"/>
<dbReference type="OrthoDB" id="9984778at2759"/>
<dbReference type="PhylomeDB" id="O49691"/>
<dbReference type="UniPathway" id="UPA00143"/>
<dbReference type="PRO" id="PR:O49691"/>
<dbReference type="Proteomes" id="UP000006548">
    <property type="component" value="Chromosome 4"/>
</dbReference>
<dbReference type="ExpressionAtlas" id="O49691">
    <property type="expression patterns" value="baseline and differential"/>
</dbReference>
<dbReference type="GO" id="GO:0016020">
    <property type="term" value="C:membrane"/>
    <property type="evidence" value="ECO:0007669"/>
    <property type="project" value="UniProtKB-SubCell"/>
</dbReference>
<dbReference type="GO" id="GO:0016740">
    <property type="term" value="F:transferase activity"/>
    <property type="evidence" value="ECO:0007669"/>
    <property type="project" value="UniProtKB-KW"/>
</dbReference>
<dbReference type="GO" id="GO:0008270">
    <property type="term" value="F:zinc ion binding"/>
    <property type="evidence" value="ECO:0007669"/>
    <property type="project" value="UniProtKB-KW"/>
</dbReference>
<dbReference type="GO" id="GO:0016567">
    <property type="term" value="P:protein ubiquitination"/>
    <property type="evidence" value="ECO:0007669"/>
    <property type="project" value="UniProtKB-UniPathway"/>
</dbReference>
<dbReference type="FunFam" id="3.30.40.10:FF:000187">
    <property type="entry name" value="E3 ubiquitin-protein ligase ATL6"/>
    <property type="match status" value="1"/>
</dbReference>
<dbReference type="Gene3D" id="3.30.40.10">
    <property type="entry name" value="Zinc/RING finger domain, C3HC4 (zinc finger)"/>
    <property type="match status" value="1"/>
</dbReference>
<dbReference type="InterPro" id="IPR053238">
    <property type="entry name" value="RING-H2_zinc_finger"/>
</dbReference>
<dbReference type="InterPro" id="IPR001841">
    <property type="entry name" value="Znf_RING"/>
</dbReference>
<dbReference type="InterPro" id="IPR013083">
    <property type="entry name" value="Znf_RING/FYVE/PHD"/>
</dbReference>
<dbReference type="PANTHER" id="PTHR14155">
    <property type="entry name" value="RING FINGER DOMAIN-CONTAINING"/>
    <property type="match status" value="1"/>
</dbReference>
<dbReference type="PANTHER" id="PTHR14155:SF618">
    <property type="entry name" value="RING-H2 FINGER PROTEIN ATL29"/>
    <property type="match status" value="1"/>
</dbReference>
<dbReference type="Pfam" id="PF13639">
    <property type="entry name" value="zf-RING_2"/>
    <property type="match status" value="1"/>
</dbReference>
<dbReference type="SMART" id="SM00184">
    <property type="entry name" value="RING"/>
    <property type="match status" value="1"/>
</dbReference>
<dbReference type="SUPFAM" id="SSF57850">
    <property type="entry name" value="RING/U-box"/>
    <property type="match status" value="1"/>
</dbReference>
<dbReference type="PROSITE" id="PS50089">
    <property type="entry name" value="ZF_RING_2"/>
    <property type="match status" value="1"/>
</dbReference>